<protein>
    <recommendedName>
        <fullName>Transcriptional regulator MraZ</fullName>
    </recommendedName>
</protein>
<keyword id="KW-0963">Cytoplasm</keyword>
<keyword id="KW-0238">DNA-binding</keyword>
<keyword id="KW-1185">Reference proteome</keyword>
<keyword id="KW-0677">Repeat</keyword>
<keyword id="KW-0678">Repressor</keyword>
<keyword id="KW-0804">Transcription</keyword>
<keyword id="KW-0805">Transcription regulation</keyword>
<reference key="1">
    <citation type="journal article" date="2009" name="PLoS Genet.">
        <title>Organised genome dynamics in the Escherichia coli species results in highly diverse adaptive paths.</title>
        <authorList>
            <person name="Touchon M."/>
            <person name="Hoede C."/>
            <person name="Tenaillon O."/>
            <person name="Barbe V."/>
            <person name="Baeriswyl S."/>
            <person name="Bidet P."/>
            <person name="Bingen E."/>
            <person name="Bonacorsi S."/>
            <person name="Bouchier C."/>
            <person name="Bouvet O."/>
            <person name="Calteau A."/>
            <person name="Chiapello H."/>
            <person name="Clermont O."/>
            <person name="Cruveiller S."/>
            <person name="Danchin A."/>
            <person name="Diard M."/>
            <person name="Dossat C."/>
            <person name="Karoui M.E."/>
            <person name="Frapy E."/>
            <person name="Garry L."/>
            <person name="Ghigo J.M."/>
            <person name="Gilles A.M."/>
            <person name="Johnson J."/>
            <person name="Le Bouguenec C."/>
            <person name="Lescat M."/>
            <person name="Mangenot S."/>
            <person name="Martinez-Jehanne V."/>
            <person name="Matic I."/>
            <person name="Nassif X."/>
            <person name="Oztas S."/>
            <person name="Petit M.A."/>
            <person name="Pichon C."/>
            <person name="Rouy Z."/>
            <person name="Ruf C.S."/>
            <person name="Schneider D."/>
            <person name="Tourret J."/>
            <person name="Vacherie B."/>
            <person name="Vallenet D."/>
            <person name="Medigue C."/>
            <person name="Rocha E.P.C."/>
            <person name="Denamur E."/>
        </authorList>
    </citation>
    <scope>NUCLEOTIDE SEQUENCE [LARGE SCALE GENOMIC DNA]</scope>
    <source>
        <strain>55989 / EAEC</strain>
    </source>
</reference>
<name>MRAZ_ECO55</name>
<feature type="chain" id="PRO_1000148855" description="Transcriptional regulator MraZ">
    <location>
        <begin position="1"/>
        <end position="152"/>
    </location>
</feature>
<feature type="domain" description="SpoVT-AbrB 1" evidence="2">
    <location>
        <begin position="5"/>
        <end position="52"/>
    </location>
</feature>
<feature type="domain" description="SpoVT-AbrB 2" evidence="2">
    <location>
        <begin position="81"/>
        <end position="124"/>
    </location>
</feature>
<sequence length="152" mass="17360">MFRGATLVNLDSKGRLSVPTRYREQLLENAAGQMVCTIDIHHPCLLLYPLPEWEIIEQKLSRLSSMNPVERRVQRLLLGHASECQMDGAGRLLIAPVLRQHAGLTKEVMLVGQFNKFELWDETTWHQQVKEDIDAEQLATGDLSERLQDLSL</sequence>
<dbReference type="EMBL" id="CU928145">
    <property type="protein sequence ID" value="CAU95965.1"/>
    <property type="molecule type" value="Genomic_DNA"/>
</dbReference>
<dbReference type="RefSeq" id="WP_001295770.1">
    <property type="nucleotide sequence ID" value="NZ_CP028304.1"/>
</dbReference>
<dbReference type="SMR" id="B7LFV1"/>
<dbReference type="GeneID" id="75202102"/>
<dbReference type="KEGG" id="eck:EC55989_0077"/>
<dbReference type="HOGENOM" id="CLU_107907_2_0_6"/>
<dbReference type="Proteomes" id="UP000000746">
    <property type="component" value="Chromosome"/>
</dbReference>
<dbReference type="GO" id="GO:0005737">
    <property type="term" value="C:cytoplasm"/>
    <property type="evidence" value="ECO:0007669"/>
    <property type="project" value="UniProtKB-UniRule"/>
</dbReference>
<dbReference type="GO" id="GO:0009295">
    <property type="term" value="C:nucleoid"/>
    <property type="evidence" value="ECO:0007669"/>
    <property type="project" value="UniProtKB-SubCell"/>
</dbReference>
<dbReference type="GO" id="GO:0003700">
    <property type="term" value="F:DNA-binding transcription factor activity"/>
    <property type="evidence" value="ECO:0007669"/>
    <property type="project" value="UniProtKB-UniRule"/>
</dbReference>
<dbReference type="GO" id="GO:0000976">
    <property type="term" value="F:transcription cis-regulatory region binding"/>
    <property type="evidence" value="ECO:0007669"/>
    <property type="project" value="TreeGrafter"/>
</dbReference>
<dbReference type="GO" id="GO:2000143">
    <property type="term" value="P:negative regulation of DNA-templated transcription initiation"/>
    <property type="evidence" value="ECO:0007669"/>
    <property type="project" value="TreeGrafter"/>
</dbReference>
<dbReference type="CDD" id="cd16321">
    <property type="entry name" value="MraZ_C"/>
    <property type="match status" value="1"/>
</dbReference>
<dbReference type="CDD" id="cd16320">
    <property type="entry name" value="MraZ_N"/>
    <property type="match status" value="1"/>
</dbReference>
<dbReference type="FunFam" id="3.40.1550.20:FF:000001">
    <property type="entry name" value="Transcriptional regulator MraZ"/>
    <property type="match status" value="1"/>
</dbReference>
<dbReference type="Gene3D" id="3.40.1550.20">
    <property type="entry name" value="Transcriptional regulator MraZ domain"/>
    <property type="match status" value="1"/>
</dbReference>
<dbReference type="HAMAP" id="MF_01008">
    <property type="entry name" value="MraZ"/>
    <property type="match status" value="1"/>
</dbReference>
<dbReference type="InterPro" id="IPR003444">
    <property type="entry name" value="MraZ"/>
</dbReference>
<dbReference type="InterPro" id="IPR035644">
    <property type="entry name" value="MraZ_C"/>
</dbReference>
<dbReference type="InterPro" id="IPR020603">
    <property type="entry name" value="MraZ_dom"/>
</dbReference>
<dbReference type="InterPro" id="IPR035642">
    <property type="entry name" value="MraZ_N"/>
</dbReference>
<dbReference type="InterPro" id="IPR038619">
    <property type="entry name" value="MraZ_sf"/>
</dbReference>
<dbReference type="InterPro" id="IPR007159">
    <property type="entry name" value="SpoVT-AbrB_dom"/>
</dbReference>
<dbReference type="InterPro" id="IPR037914">
    <property type="entry name" value="SpoVT-AbrB_sf"/>
</dbReference>
<dbReference type="NCBIfam" id="TIGR00242">
    <property type="entry name" value="division/cell wall cluster transcriptional repressor MraZ"/>
    <property type="match status" value="1"/>
</dbReference>
<dbReference type="PANTHER" id="PTHR34701">
    <property type="entry name" value="TRANSCRIPTIONAL REGULATOR MRAZ"/>
    <property type="match status" value="1"/>
</dbReference>
<dbReference type="PANTHER" id="PTHR34701:SF1">
    <property type="entry name" value="TRANSCRIPTIONAL REGULATOR MRAZ"/>
    <property type="match status" value="1"/>
</dbReference>
<dbReference type="Pfam" id="PF02381">
    <property type="entry name" value="MraZ"/>
    <property type="match status" value="2"/>
</dbReference>
<dbReference type="SUPFAM" id="SSF89447">
    <property type="entry name" value="AbrB/MazE/MraZ-like"/>
    <property type="match status" value="1"/>
</dbReference>
<dbReference type="PROSITE" id="PS51740">
    <property type="entry name" value="SPOVT_ABRB"/>
    <property type="match status" value="2"/>
</dbReference>
<proteinExistence type="inferred from homology"/>
<evidence type="ECO:0000255" key="1">
    <source>
        <dbReference type="HAMAP-Rule" id="MF_01008"/>
    </source>
</evidence>
<evidence type="ECO:0000255" key="2">
    <source>
        <dbReference type="PROSITE-ProRule" id="PRU01076"/>
    </source>
</evidence>
<accession>B7LFV1</accession>
<comment type="function">
    <text evidence="1">Negatively regulates its own expression and that of the subsequent genes in the proximal part of the division and cell wall (dcw) gene cluster. Acts by binding directly to DNA. May also regulate the expression of genes outside the dcw cluster.</text>
</comment>
<comment type="subunit">
    <text evidence="1">Forms oligomers.</text>
</comment>
<comment type="subcellular location">
    <subcellularLocation>
        <location evidence="1">Cytoplasm</location>
        <location evidence="1">Nucleoid</location>
    </subcellularLocation>
</comment>
<comment type="similarity">
    <text evidence="1">Belongs to the MraZ family.</text>
</comment>
<organism>
    <name type="scientific">Escherichia coli (strain 55989 / EAEC)</name>
    <dbReference type="NCBI Taxonomy" id="585055"/>
    <lineage>
        <taxon>Bacteria</taxon>
        <taxon>Pseudomonadati</taxon>
        <taxon>Pseudomonadota</taxon>
        <taxon>Gammaproteobacteria</taxon>
        <taxon>Enterobacterales</taxon>
        <taxon>Enterobacteriaceae</taxon>
        <taxon>Escherichia</taxon>
    </lineage>
</organism>
<gene>
    <name evidence="1" type="primary">mraZ</name>
    <name type="ordered locus">EC55989_0077</name>
</gene>